<gene>
    <name evidence="1" type="primary">dnaK</name>
    <name type="ordered locus">STER_0163</name>
</gene>
<feature type="chain" id="PRO_1000059688" description="Chaperone protein DnaK">
    <location>
        <begin position="1"/>
        <end position="607"/>
    </location>
</feature>
<feature type="region of interest" description="Disordered" evidence="2">
    <location>
        <begin position="579"/>
        <end position="607"/>
    </location>
</feature>
<feature type="compositionally biased region" description="Low complexity" evidence="2">
    <location>
        <begin position="579"/>
        <end position="591"/>
    </location>
</feature>
<feature type="compositionally biased region" description="Acidic residues" evidence="2">
    <location>
        <begin position="595"/>
        <end position="607"/>
    </location>
</feature>
<feature type="modified residue" description="Phosphothreonine; by autocatalysis" evidence="1">
    <location>
        <position position="173"/>
    </location>
</feature>
<sequence>MSKIIGIDLGTTNSAVAVLEGTEPKIIANPEGNRTTPSVVSFKNGEIIVGDAAKRQAVTNPDTVISIKSKMGTSEKVSANGKEYTPQEISAMILQYLKGYAEEYLGEKVTKAVITVPAYFNDAQRQATKDAGKIAGLEVERIVNEPTAAALAYGLDKTDKEEKILVFDLGGGTFDVSILELGDGVFDVLATAGDNKLGGDDFDQKIIDYMVEEFKKENGIDLSTDKMALQRLKDAAEKAKKDLSGVTSTQISLPFITAGEAGPLHLEMTLTRAKFDDLTRDLVERTKTPVRQALSDAGLSLSDIDEVILVGGSTRIPAVVEAVKAETGKEPNKSVNPDEVVAMGAAIQGGVISGDVKDVVLLDVTPLSLGIETMGGVFTKLIERNTTIPTSKSQVFSTAADNQPAVDIHVLQGERPMAADNKTLGRFQLTDIPAAPRGVPQIEVTFDIDKNGIVSVKAKDLGTQKEQTIVIQSNSGLTDEEIERMMKDAEANAEADAKRKAEVELRNEVDQAIFATEKTIKETEGKGFDTERDAAQSALDELKKAQESGNLDDMKAKLEALNEKAQALAVKLYEQAAAAQQAQAGAEGAQATDNSGDDVVDGEFTEK</sequence>
<comment type="function">
    <text evidence="1">Acts as a chaperone.</text>
</comment>
<comment type="induction">
    <text evidence="1">By stress conditions e.g. heat shock.</text>
</comment>
<comment type="similarity">
    <text evidence="1">Belongs to the heat shock protein 70 family.</text>
</comment>
<dbReference type="EMBL" id="CP000419">
    <property type="protein sequence ID" value="ABJ65506.1"/>
    <property type="molecule type" value="Genomic_DNA"/>
</dbReference>
<dbReference type="RefSeq" id="WP_011226783.1">
    <property type="nucleotide sequence ID" value="NC_008532.1"/>
</dbReference>
<dbReference type="SMR" id="Q03MR6"/>
<dbReference type="GeneID" id="66898045"/>
<dbReference type="KEGG" id="ste:STER_0163"/>
<dbReference type="HOGENOM" id="CLU_005965_2_1_9"/>
<dbReference type="GO" id="GO:0005524">
    <property type="term" value="F:ATP binding"/>
    <property type="evidence" value="ECO:0007669"/>
    <property type="project" value="UniProtKB-UniRule"/>
</dbReference>
<dbReference type="GO" id="GO:0140662">
    <property type="term" value="F:ATP-dependent protein folding chaperone"/>
    <property type="evidence" value="ECO:0007669"/>
    <property type="project" value="InterPro"/>
</dbReference>
<dbReference type="GO" id="GO:0051082">
    <property type="term" value="F:unfolded protein binding"/>
    <property type="evidence" value="ECO:0007669"/>
    <property type="project" value="InterPro"/>
</dbReference>
<dbReference type="CDD" id="cd10234">
    <property type="entry name" value="ASKHA_NBD_HSP70_DnaK-like"/>
    <property type="match status" value="1"/>
</dbReference>
<dbReference type="FunFam" id="2.60.34.10:FF:000014">
    <property type="entry name" value="Chaperone protein DnaK HSP70"/>
    <property type="match status" value="1"/>
</dbReference>
<dbReference type="FunFam" id="3.30.420.40:FF:000071">
    <property type="entry name" value="Molecular chaperone DnaK"/>
    <property type="match status" value="1"/>
</dbReference>
<dbReference type="FunFam" id="3.90.640.10:FF:000003">
    <property type="entry name" value="Molecular chaperone DnaK"/>
    <property type="match status" value="1"/>
</dbReference>
<dbReference type="Gene3D" id="1.20.1270.10">
    <property type="match status" value="1"/>
</dbReference>
<dbReference type="Gene3D" id="3.30.420.40">
    <property type="match status" value="2"/>
</dbReference>
<dbReference type="Gene3D" id="3.90.640.10">
    <property type="entry name" value="Actin, Chain A, domain 4"/>
    <property type="match status" value="1"/>
</dbReference>
<dbReference type="Gene3D" id="2.60.34.10">
    <property type="entry name" value="Substrate Binding Domain Of DNAk, Chain A, domain 1"/>
    <property type="match status" value="1"/>
</dbReference>
<dbReference type="HAMAP" id="MF_00332">
    <property type="entry name" value="DnaK"/>
    <property type="match status" value="1"/>
</dbReference>
<dbReference type="InterPro" id="IPR043129">
    <property type="entry name" value="ATPase_NBD"/>
</dbReference>
<dbReference type="InterPro" id="IPR012725">
    <property type="entry name" value="Chaperone_DnaK"/>
</dbReference>
<dbReference type="InterPro" id="IPR018181">
    <property type="entry name" value="Heat_shock_70_CS"/>
</dbReference>
<dbReference type="InterPro" id="IPR029048">
    <property type="entry name" value="HSP70_C_sf"/>
</dbReference>
<dbReference type="InterPro" id="IPR029047">
    <property type="entry name" value="HSP70_peptide-bd_sf"/>
</dbReference>
<dbReference type="InterPro" id="IPR013126">
    <property type="entry name" value="Hsp_70_fam"/>
</dbReference>
<dbReference type="NCBIfam" id="NF001413">
    <property type="entry name" value="PRK00290.1"/>
    <property type="match status" value="1"/>
</dbReference>
<dbReference type="NCBIfam" id="TIGR02350">
    <property type="entry name" value="prok_dnaK"/>
    <property type="match status" value="1"/>
</dbReference>
<dbReference type="PANTHER" id="PTHR19375">
    <property type="entry name" value="HEAT SHOCK PROTEIN 70KDA"/>
    <property type="match status" value="1"/>
</dbReference>
<dbReference type="Pfam" id="PF00012">
    <property type="entry name" value="HSP70"/>
    <property type="match status" value="1"/>
</dbReference>
<dbReference type="PRINTS" id="PR00301">
    <property type="entry name" value="HEATSHOCK70"/>
</dbReference>
<dbReference type="SUPFAM" id="SSF53067">
    <property type="entry name" value="Actin-like ATPase domain"/>
    <property type="match status" value="2"/>
</dbReference>
<dbReference type="SUPFAM" id="SSF100934">
    <property type="entry name" value="Heat shock protein 70kD (HSP70), C-terminal subdomain"/>
    <property type="match status" value="1"/>
</dbReference>
<dbReference type="SUPFAM" id="SSF100920">
    <property type="entry name" value="Heat shock protein 70kD (HSP70), peptide-binding domain"/>
    <property type="match status" value="1"/>
</dbReference>
<dbReference type="PROSITE" id="PS00297">
    <property type="entry name" value="HSP70_1"/>
    <property type="match status" value="1"/>
</dbReference>
<dbReference type="PROSITE" id="PS00329">
    <property type="entry name" value="HSP70_2"/>
    <property type="match status" value="1"/>
</dbReference>
<dbReference type="PROSITE" id="PS01036">
    <property type="entry name" value="HSP70_3"/>
    <property type="match status" value="1"/>
</dbReference>
<reference key="1">
    <citation type="journal article" date="2006" name="Proc. Natl. Acad. Sci. U.S.A.">
        <title>Comparative genomics of the lactic acid bacteria.</title>
        <authorList>
            <person name="Makarova K.S."/>
            <person name="Slesarev A."/>
            <person name="Wolf Y.I."/>
            <person name="Sorokin A."/>
            <person name="Mirkin B."/>
            <person name="Koonin E.V."/>
            <person name="Pavlov A."/>
            <person name="Pavlova N."/>
            <person name="Karamychev V."/>
            <person name="Polouchine N."/>
            <person name="Shakhova V."/>
            <person name="Grigoriev I."/>
            <person name="Lou Y."/>
            <person name="Rohksar D."/>
            <person name="Lucas S."/>
            <person name="Huang K."/>
            <person name="Goodstein D.M."/>
            <person name="Hawkins T."/>
            <person name="Plengvidhya V."/>
            <person name="Welker D."/>
            <person name="Hughes J."/>
            <person name="Goh Y."/>
            <person name="Benson A."/>
            <person name="Baldwin K."/>
            <person name="Lee J.-H."/>
            <person name="Diaz-Muniz I."/>
            <person name="Dosti B."/>
            <person name="Smeianov V."/>
            <person name="Wechter W."/>
            <person name="Barabote R."/>
            <person name="Lorca G."/>
            <person name="Altermann E."/>
            <person name="Barrangou R."/>
            <person name="Ganesan B."/>
            <person name="Xie Y."/>
            <person name="Rawsthorne H."/>
            <person name="Tamir D."/>
            <person name="Parker C."/>
            <person name="Breidt F."/>
            <person name="Broadbent J.R."/>
            <person name="Hutkins R."/>
            <person name="O'Sullivan D."/>
            <person name="Steele J."/>
            <person name="Unlu G."/>
            <person name="Saier M.H. Jr."/>
            <person name="Klaenhammer T."/>
            <person name="Richardson P."/>
            <person name="Kozyavkin S."/>
            <person name="Weimer B.C."/>
            <person name="Mills D.A."/>
        </authorList>
    </citation>
    <scope>NUCLEOTIDE SEQUENCE [LARGE SCALE GENOMIC DNA]</scope>
    <source>
        <strain>ATCC BAA-491 / LMD-9</strain>
    </source>
</reference>
<keyword id="KW-0067">ATP-binding</keyword>
<keyword id="KW-0143">Chaperone</keyword>
<keyword id="KW-0547">Nucleotide-binding</keyword>
<keyword id="KW-0597">Phosphoprotein</keyword>
<keyword id="KW-0346">Stress response</keyword>
<proteinExistence type="inferred from homology"/>
<accession>Q03MR6</accession>
<evidence type="ECO:0000255" key="1">
    <source>
        <dbReference type="HAMAP-Rule" id="MF_00332"/>
    </source>
</evidence>
<evidence type="ECO:0000256" key="2">
    <source>
        <dbReference type="SAM" id="MobiDB-lite"/>
    </source>
</evidence>
<protein>
    <recommendedName>
        <fullName evidence="1">Chaperone protein DnaK</fullName>
    </recommendedName>
    <alternativeName>
        <fullName evidence="1">HSP70</fullName>
    </alternativeName>
    <alternativeName>
        <fullName evidence="1">Heat shock 70 kDa protein</fullName>
    </alternativeName>
    <alternativeName>
        <fullName evidence="1">Heat shock protein 70</fullName>
    </alternativeName>
</protein>
<name>DNAK_STRTD</name>
<organism>
    <name type="scientific">Streptococcus thermophilus (strain ATCC BAA-491 / LMD-9)</name>
    <dbReference type="NCBI Taxonomy" id="322159"/>
    <lineage>
        <taxon>Bacteria</taxon>
        <taxon>Bacillati</taxon>
        <taxon>Bacillota</taxon>
        <taxon>Bacilli</taxon>
        <taxon>Lactobacillales</taxon>
        <taxon>Streptococcaceae</taxon>
        <taxon>Streptococcus</taxon>
    </lineage>
</organism>